<feature type="chain" id="PRO_1000141727" description="DNA-directed RNA polymerase subunit beta">
    <location>
        <begin position="1"/>
        <end position="1397"/>
    </location>
</feature>
<comment type="function">
    <text evidence="1">DNA-dependent RNA polymerase catalyzes the transcription of DNA into RNA using the four ribonucleoside triphosphates as substrates.</text>
</comment>
<comment type="catalytic activity">
    <reaction evidence="1">
        <text>RNA(n) + a ribonucleoside 5'-triphosphate = RNA(n+1) + diphosphate</text>
        <dbReference type="Rhea" id="RHEA:21248"/>
        <dbReference type="Rhea" id="RHEA-COMP:14527"/>
        <dbReference type="Rhea" id="RHEA-COMP:17342"/>
        <dbReference type="ChEBI" id="CHEBI:33019"/>
        <dbReference type="ChEBI" id="CHEBI:61557"/>
        <dbReference type="ChEBI" id="CHEBI:140395"/>
        <dbReference type="EC" id="2.7.7.6"/>
    </reaction>
</comment>
<comment type="subunit">
    <text evidence="1">The RNAP catalytic core consists of 2 alpha, 1 beta, 1 beta' and 1 omega subunit. When a sigma factor is associated with the core the holoenzyme is formed, which can initiate transcription.</text>
</comment>
<comment type="similarity">
    <text evidence="1">Belongs to the RNA polymerase beta chain family.</text>
</comment>
<evidence type="ECO:0000255" key="1">
    <source>
        <dbReference type="HAMAP-Rule" id="MF_01321"/>
    </source>
</evidence>
<organism>
    <name type="scientific">Rhodospirillum centenum (strain ATCC 51521 / SW)</name>
    <dbReference type="NCBI Taxonomy" id="414684"/>
    <lineage>
        <taxon>Bacteria</taxon>
        <taxon>Pseudomonadati</taxon>
        <taxon>Pseudomonadota</taxon>
        <taxon>Alphaproteobacteria</taxon>
        <taxon>Rhodospirillales</taxon>
        <taxon>Rhodospirillaceae</taxon>
        <taxon>Rhodospirillum</taxon>
    </lineage>
</organism>
<gene>
    <name evidence="1" type="primary">rpoB</name>
    <name type="ordered locus">RC1_0701</name>
</gene>
<keyword id="KW-0240">DNA-directed RNA polymerase</keyword>
<keyword id="KW-0548">Nucleotidyltransferase</keyword>
<keyword id="KW-1185">Reference proteome</keyword>
<keyword id="KW-0804">Transcription</keyword>
<keyword id="KW-0808">Transferase</keyword>
<name>RPOB_RHOCS</name>
<reference key="1">
    <citation type="submission" date="2007-03" db="EMBL/GenBank/DDBJ databases">
        <title>Genome sequence of Rhodospirillum centenum.</title>
        <authorList>
            <person name="Touchman J.W."/>
            <person name="Bauer C."/>
            <person name="Blankenship R.E."/>
        </authorList>
    </citation>
    <scope>NUCLEOTIDE SEQUENCE [LARGE SCALE GENOMIC DNA]</scope>
    <source>
        <strain>ATCC 51521 / SW</strain>
    </source>
</reference>
<dbReference type="EC" id="2.7.7.6" evidence="1"/>
<dbReference type="EMBL" id="CP000613">
    <property type="protein sequence ID" value="ACI98132.1"/>
    <property type="molecule type" value="Genomic_DNA"/>
</dbReference>
<dbReference type="RefSeq" id="WP_012565924.1">
    <property type="nucleotide sequence ID" value="NC_011420.2"/>
</dbReference>
<dbReference type="SMR" id="B6IRP6"/>
<dbReference type="STRING" id="414684.RC1_0701"/>
<dbReference type="KEGG" id="rce:RC1_0701"/>
<dbReference type="eggNOG" id="COG0085">
    <property type="taxonomic scope" value="Bacteria"/>
</dbReference>
<dbReference type="HOGENOM" id="CLU_000524_4_0_5"/>
<dbReference type="OrthoDB" id="9803954at2"/>
<dbReference type="Proteomes" id="UP000001591">
    <property type="component" value="Chromosome"/>
</dbReference>
<dbReference type="GO" id="GO:0000428">
    <property type="term" value="C:DNA-directed RNA polymerase complex"/>
    <property type="evidence" value="ECO:0007669"/>
    <property type="project" value="UniProtKB-KW"/>
</dbReference>
<dbReference type="GO" id="GO:0003677">
    <property type="term" value="F:DNA binding"/>
    <property type="evidence" value="ECO:0007669"/>
    <property type="project" value="UniProtKB-UniRule"/>
</dbReference>
<dbReference type="GO" id="GO:0003899">
    <property type="term" value="F:DNA-directed RNA polymerase activity"/>
    <property type="evidence" value="ECO:0007669"/>
    <property type="project" value="UniProtKB-UniRule"/>
</dbReference>
<dbReference type="GO" id="GO:0032549">
    <property type="term" value="F:ribonucleoside binding"/>
    <property type="evidence" value="ECO:0007669"/>
    <property type="project" value="InterPro"/>
</dbReference>
<dbReference type="GO" id="GO:0006351">
    <property type="term" value="P:DNA-templated transcription"/>
    <property type="evidence" value="ECO:0007669"/>
    <property type="project" value="UniProtKB-UniRule"/>
</dbReference>
<dbReference type="CDD" id="cd00653">
    <property type="entry name" value="RNA_pol_B_RPB2"/>
    <property type="match status" value="1"/>
</dbReference>
<dbReference type="FunFam" id="2.40.50.100:FF:000006">
    <property type="entry name" value="DNA-directed RNA polymerase subunit beta"/>
    <property type="match status" value="1"/>
</dbReference>
<dbReference type="FunFam" id="3.90.1800.10:FF:000001">
    <property type="entry name" value="DNA-directed RNA polymerase subunit beta"/>
    <property type="match status" value="1"/>
</dbReference>
<dbReference type="Gene3D" id="2.40.50.100">
    <property type="match status" value="1"/>
</dbReference>
<dbReference type="Gene3D" id="2.40.50.150">
    <property type="match status" value="1"/>
</dbReference>
<dbReference type="Gene3D" id="3.90.1100.10">
    <property type="match status" value="2"/>
</dbReference>
<dbReference type="Gene3D" id="2.30.150.10">
    <property type="entry name" value="DNA-directed RNA polymerase, beta subunit, external 1 domain"/>
    <property type="match status" value="1"/>
</dbReference>
<dbReference type="Gene3D" id="2.40.270.10">
    <property type="entry name" value="DNA-directed RNA polymerase, subunit 2, domain 6"/>
    <property type="match status" value="1"/>
</dbReference>
<dbReference type="Gene3D" id="3.90.1800.10">
    <property type="entry name" value="RNA polymerase alpha subunit dimerisation domain"/>
    <property type="match status" value="1"/>
</dbReference>
<dbReference type="Gene3D" id="3.90.1110.10">
    <property type="entry name" value="RNA polymerase Rpb2, domain 2"/>
    <property type="match status" value="1"/>
</dbReference>
<dbReference type="HAMAP" id="MF_01321">
    <property type="entry name" value="RNApol_bact_RpoB"/>
    <property type="match status" value="1"/>
</dbReference>
<dbReference type="InterPro" id="IPR042107">
    <property type="entry name" value="DNA-dir_RNA_pol_bsu_ext_1_sf"/>
</dbReference>
<dbReference type="InterPro" id="IPR019462">
    <property type="entry name" value="DNA-dir_RNA_pol_bsu_external_1"/>
</dbReference>
<dbReference type="InterPro" id="IPR015712">
    <property type="entry name" value="DNA-dir_RNA_pol_su2"/>
</dbReference>
<dbReference type="InterPro" id="IPR007120">
    <property type="entry name" value="DNA-dir_RNAP_su2_dom"/>
</dbReference>
<dbReference type="InterPro" id="IPR037033">
    <property type="entry name" value="DNA-dir_RNAP_su2_hyb_sf"/>
</dbReference>
<dbReference type="InterPro" id="IPR010243">
    <property type="entry name" value="RNA_pol_bsu_bac"/>
</dbReference>
<dbReference type="InterPro" id="IPR007121">
    <property type="entry name" value="RNA_pol_bsu_CS"/>
</dbReference>
<dbReference type="InterPro" id="IPR007644">
    <property type="entry name" value="RNA_pol_bsu_protrusion"/>
</dbReference>
<dbReference type="InterPro" id="IPR007642">
    <property type="entry name" value="RNA_pol_Rpb2_2"/>
</dbReference>
<dbReference type="InterPro" id="IPR037034">
    <property type="entry name" value="RNA_pol_Rpb2_2_sf"/>
</dbReference>
<dbReference type="InterPro" id="IPR007645">
    <property type="entry name" value="RNA_pol_Rpb2_3"/>
</dbReference>
<dbReference type="InterPro" id="IPR007641">
    <property type="entry name" value="RNA_pol_Rpb2_7"/>
</dbReference>
<dbReference type="InterPro" id="IPR014724">
    <property type="entry name" value="RNA_pol_RPB2_OB-fold"/>
</dbReference>
<dbReference type="NCBIfam" id="NF001616">
    <property type="entry name" value="PRK00405.1"/>
    <property type="match status" value="1"/>
</dbReference>
<dbReference type="NCBIfam" id="TIGR02013">
    <property type="entry name" value="rpoB"/>
    <property type="match status" value="1"/>
</dbReference>
<dbReference type="PANTHER" id="PTHR20856">
    <property type="entry name" value="DNA-DIRECTED RNA POLYMERASE I SUBUNIT 2"/>
    <property type="match status" value="1"/>
</dbReference>
<dbReference type="Pfam" id="PF04563">
    <property type="entry name" value="RNA_pol_Rpb2_1"/>
    <property type="match status" value="1"/>
</dbReference>
<dbReference type="Pfam" id="PF04561">
    <property type="entry name" value="RNA_pol_Rpb2_2"/>
    <property type="match status" value="1"/>
</dbReference>
<dbReference type="Pfam" id="PF04565">
    <property type="entry name" value="RNA_pol_Rpb2_3"/>
    <property type="match status" value="1"/>
</dbReference>
<dbReference type="Pfam" id="PF10385">
    <property type="entry name" value="RNA_pol_Rpb2_45"/>
    <property type="match status" value="1"/>
</dbReference>
<dbReference type="Pfam" id="PF00562">
    <property type="entry name" value="RNA_pol_Rpb2_6"/>
    <property type="match status" value="1"/>
</dbReference>
<dbReference type="Pfam" id="PF04560">
    <property type="entry name" value="RNA_pol_Rpb2_7"/>
    <property type="match status" value="1"/>
</dbReference>
<dbReference type="SUPFAM" id="SSF64484">
    <property type="entry name" value="beta and beta-prime subunits of DNA dependent RNA-polymerase"/>
    <property type="match status" value="1"/>
</dbReference>
<dbReference type="PROSITE" id="PS01166">
    <property type="entry name" value="RNA_POL_BETA"/>
    <property type="match status" value="1"/>
</dbReference>
<sequence>MAKSFTGRKRIRKSFGRIPEVTRMPNLIEVQRSSYDHFLQMDVPPEKRANVGLQEVFRSVFPIKDFSERAVLDFVRYELEQPKYDVEECQQRGMTFAAPLKVTLRLTVFDVDEDTGLRSIRDIKEQDVYMGDMPLMTANGTFIINGTERVIVSQMHRSPGVFFDHDKGKTHSSGKYLFAARVIPYRGSWLDFEFDAKDIVYVRIDRRRKLPATTLLYALDGADSAELRAERRALGKDLLPYEAQGMAKEEILGYFYETITYQRAADGWKTGFDAERMKGQKLLTDLVDARTGEVLASRDTKLTPRLIRKLQDQGLQEIKVAIEDIIGRYLAIDIIDEKTGEVIYEAGDELSATALERLEKMGVEELPVLNVDHLNIGAYIRNTMAADRNASREDALIDIYRVMRPGEPPTLESAEALFAGLFFDQERYDLSAVGRVKMNARLGFETDDQMRVLRKEDILKILKILVELKDGRGEIDDIDHLGNRRVRSVGELMENQYRVGLLRMERAIRERMSSVEIDTVMPHDLINAKPAAAAVREFFGSSQLSQFMDQTNPLSEITHKRRLSALGPGGLTRERAGFEVRDVHPTHYGRICPIETPEGPNIGLINSLATYARVNQYGFIESPYRKVIDGRVTDEVVYLSAMEEGRYTVAEANAPLDAGNRFADPLVSCRKGGEYLLVRPDMIDLIDVSPKQLVSVAAALIPFLENDDANRALMGSNMQRQAVPLIKADSPLVGTGMEATVARDSGVTIVTRRAGIVDQVDATRIVIRATEDTDPAAPGVDIYNLLKFQRSNQNTCINQKPLVKVGDRVQKGDIIADGPSTDLGELALGRNVLVAFMPWNGYNFEDSILISERIVRDDVFTSIHIEEFEVMARDTKLGQEEITRDIPNVGEEALKNLDEAGIVYIGAEVRPGDILVGKVTPKGESPMTPEEKLLRAIFGEKASDVRDTSLRLPPGVAGTVVEVRVFSRRGVDKDERALAIERAEIEKLAKDRDDEKAILERSFYTRLKELLLGQTSVSGPKGMKGGETITDETLAGLTRGQWRHISVENDQVMEIIEQTGKVFDDSVQRLQERFENKVEKLQRGDELPPGVMKMVKVFVAVKRKLQPGDKMAGRHGNKGVISRITPIEDMPYLEDGRNVDIVLNPLGVPSRMNVGQILETHLGWAAAGIGRQIGEMLDRMRAATVEAADKARTAEDLKERLRSIYGEAVYESDIAPMSEAQLMELAGNLRRGIPFATPVFDGAREDDICRMLEAAGLDRSGQSTLIDGRTGEPFDRRVTVGYIYMLKLHHLVDDKIHARSIGPYSLVTQQPLGGKAQFGGQRFGEMEVWALEAYGAAYTLQEMLTVKSDDVSGRTKVYEAIVRGDDNFEAGIPESFNVLVKELRSLGLNVELNQRTY</sequence>
<protein>
    <recommendedName>
        <fullName evidence="1">DNA-directed RNA polymerase subunit beta</fullName>
        <shortName evidence="1">RNAP subunit beta</shortName>
        <ecNumber evidence="1">2.7.7.6</ecNumber>
    </recommendedName>
    <alternativeName>
        <fullName evidence="1">RNA polymerase subunit beta</fullName>
    </alternativeName>
    <alternativeName>
        <fullName evidence="1">Transcriptase subunit beta</fullName>
    </alternativeName>
</protein>
<proteinExistence type="inferred from homology"/>
<accession>B6IRP6</accession>